<keyword id="KW-0028">Amino-acid biosynthesis</keyword>
<keyword id="KW-0055">Arginine biosynthesis</keyword>
<keyword id="KW-0963">Cytoplasm</keyword>
<keyword id="KW-0457">Lysine biosynthesis</keyword>
<keyword id="KW-0521">NADP</keyword>
<keyword id="KW-0560">Oxidoreductase</keyword>
<accession>A1RR73</accession>
<sequence length="352" mass="39203">MKKVCIVGASGFTGGELLRILLQHRGVEIVCATSRRFKGEYVYRVHPNLRGFTQLKFVEPSIDVALKADVVFLALPHGESVKWVPKLYESGVAVFDLSADFRLKDPNAYVEWYKWPQPHPYPDLLQKAVYGQPELHRDELVGAKLVAVPGCMATASILMLAPLAKFGLLSDTPPVVDAKIGSSGAGAEGSVVDLHSFRTYVVRPYEPVHHRHIAEIEQELTRLAGRKVRIAFTPHAVDIVRGIFTTGHVYVEKLPSETDMWRYYRALYGDSKFIRIVKDRLGISRYPNVKYVLGTNIVDLGFELDPRLNRVVTFAAIDNLVRGAAGQAVQAFNIAMGFPEDEGLRQIPIAPL</sequence>
<comment type="function">
    <text evidence="1">Involved in both the arginine and lysine biosynthetic pathways.</text>
</comment>
<comment type="catalytic activity">
    <reaction evidence="1">
        <text>[amino-group carrier protein]-C-terminal-N-(1-carboxy-5-oxopentan-1-yl)-L-glutamine + phosphate + NADP(+) = [amino-group carrier protein]-C-terminal-N-(1-carboxy-5-phosphooxy-5-oxopentan-1-yl)-L-glutamine + NADPH + H(+)</text>
        <dbReference type="Rhea" id="RHEA:41948"/>
        <dbReference type="Rhea" id="RHEA-COMP:9712"/>
        <dbReference type="Rhea" id="RHEA-COMP:9714"/>
        <dbReference type="ChEBI" id="CHEBI:15378"/>
        <dbReference type="ChEBI" id="CHEBI:43474"/>
        <dbReference type="ChEBI" id="CHEBI:57783"/>
        <dbReference type="ChEBI" id="CHEBI:58349"/>
        <dbReference type="ChEBI" id="CHEBI:78499"/>
        <dbReference type="ChEBI" id="CHEBI:78501"/>
        <dbReference type="EC" id="1.2.1.103"/>
    </reaction>
</comment>
<comment type="catalytic activity">
    <reaction evidence="1">
        <text>[amino-group carrier protein]-C-terminal-gamma-(L-glutamyl-5-semialdehyde)-L-glutamate + phosphate + NADP(+) = [amino-group carrier protein]-C-terminal-gamma-(5-phospho-L-glutamyl)-L-glutamate + NADPH + H(+)</text>
        <dbReference type="Rhea" id="RHEA:52668"/>
        <dbReference type="Rhea" id="RHEA-COMP:13313"/>
        <dbReference type="Rhea" id="RHEA-COMP:13327"/>
        <dbReference type="ChEBI" id="CHEBI:15378"/>
        <dbReference type="ChEBI" id="CHEBI:43474"/>
        <dbReference type="ChEBI" id="CHEBI:57783"/>
        <dbReference type="ChEBI" id="CHEBI:58349"/>
        <dbReference type="ChEBI" id="CHEBI:136717"/>
        <dbReference type="ChEBI" id="CHEBI:136761"/>
        <dbReference type="EC" id="1.2.1.106"/>
    </reaction>
</comment>
<comment type="pathway">
    <text evidence="1">Amino-acid biosynthesis; L-lysine biosynthesis via AAA pathway; L-lysine from L-alpha-aminoadipate (Thermus route): step 3/5.</text>
</comment>
<comment type="pathway">
    <text evidence="1">Amino-acid biosynthesis; L-arginine biosynthesis.</text>
</comment>
<comment type="subcellular location">
    <subcellularLocation>
        <location evidence="1">Cytoplasm</location>
    </subcellularLocation>
</comment>
<comment type="similarity">
    <text evidence="1">Belongs to the NAGSA dehydrogenase family. Type 1 subfamily. LysY sub-subfamily.</text>
</comment>
<proteinExistence type="inferred from homology"/>
<evidence type="ECO:0000255" key="1">
    <source>
        <dbReference type="HAMAP-Rule" id="MF_02083"/>
    </source>
</evidence>
<reference key="1">
    <citation type="submission" date="2006-12" db="EMBL/GenBank/DDBJ databases">
        <title>Complete sequence of Pyrobaculum islandicum DSM 4184.</title>
        <authorList>
            <person name="Copeland A."/>
            <person name="Lucas S."/>
            <person name="Lapidus A."/>
            <person name="Barry K."/>
            <person name="Detter J.C."/>
            <person name="Glavina del Rio T."/>
            <person name="Dalin E."/>
            <person name="Tice H."/>
            <person name="Pitluck S."/>
            <person name="Meincke L."/>
            <person name="Brettin T."/>
            <person name="Bruce D."/>
            <person name="Han C."/>
            <person name="Tapia R."/>
            <person name="Gilna P."/>
            <person name="Schmutz J."/>
            <person name="Larimer F."/>
            <person name="Land M."/>
            <person name="Hauser L."/>
            <person name="Kyrpides N."/>
            <person name="Mikhailova N."/>
            <person name="Cozen A.E."/>
            <person name="Fitz-Gibbon S.T."/>
            <person name="House C.H."/>
            <person name="Saltikov C."/>
            <person name="Lowe T."/>
            <person name="Richardson P."/>
        </authorList>
    </citation>
    <scope>NUCLEOTIDE SEQUENCE [LARGE SCALE GENOMIC DNA]</scope>
    <source>
        <strain>DSM 4184 / JCM 9189 / GEO3</strain>
    </source>
</reference>
<feature type="chain" id="PRO_1000076739" description="Putative [LysW]-L-2-aminoadipate/[LysW]-L-glutamate phosphate reductase">
    <location>
        <begin position="1"/>
        <end position="352"/>
    </location>
</feature>
<feature type="active site" evidence="1">
    <location>
        <position position="151"/>
    </location>
</feature>
<feature type="binding site" evidence="1">
    <location>
        <begin position="10"/>
        <end position="13"/>
    </location>
    <ligand>
        <name>NADP(+)</name>
        <dbReference type="ChEBI" id="CHEBI:58349"/>
    </ligand>
</feature>
<feature type="binding site" evidence="1">
    <location>
        <begin position="34"/>
        <end position="36"/>
    </location>
    <ligand>
        <name>NADP(+)</name>
        <dbReference type="ChEBI" id="CHEBI:58349"/>
    </ligand>
</feature>
<feature type="binding site" evidence="1">
    <location>
        <position position="319"/>
    </location>
    <ligand>
        <name>NADP(+)</name>
        <dbReference type="ChEBI" id="CHEBI:58349"/>
    </ligand>
</feature>
<gene>
    <name evidence="1" type="primary">lysY</name>
    <name type="ordered locus">Pisl_0276</name>
</gene>
<name>LYSY_PYRIL</name>
<dbReference type="EC" id="1.2.1.103" evidence="1"/>
<dbReference type="EC" id="1.2.1.106" evidence="1"/>
<dbReference type="EMBL" id="CP000504">
    <property type="protein sequence ID" value="ABL87455.1"/>
    <property type="molecule type" value="Genomic_DNA"/>
</dbReference>
<dbReference type="RefSeq" id="WP_011762032.1">
    <property type="nucleotide sequence ID" value="NC_008701.1"/>
</dbReference>
<dbReference type="SMR" id="A1RR73"/>
<dbReference type="STRING" id="384616.Pisl_0276"/>
<dbReference type="GeneID" id="4617833"/>
<dbReference type="KEGG" id="pis:Pisl_0276"/>
<dbReference type="eggNOG" id="arCOG00495">
    <property type="taxonomic scope" value="Archaea"/>
</dbReference>
<dbReference type="HOGENOM" id="CLU_006384_0_1_2"/>
<dbReference type="OrthoDB" id="372053at2157"/>
<dbReference type="UniPathway" id="UPA00033">
    <property type="reaction ID" value="UER00037"/>
</dbReference>
<dbReference type="UniPathway" id="UPA00068"/>
<dbReference type="Proteomes" id="UP000002595">
    <property type="component" value="Chromosome"/>
</dbReference>
<dbReference type="GO" id="GO:0005737">
    <property type="term" value="C:cytoplasm"/>
    <property type="evidence" value="ECO:0007669"/>
    <property type="project" value="UniProtKB-SubCell"/>
</dbReference>
<dbReference type="GO" id="GO:0043870">
    <property type="term" value="F:N-acetyl-gamma-aminoadipyl-phosphate reductase activity"/>
    <property type="evidence" value="ECO:0007669"/>
    <property type="project" value="RHEA"/>
</dbReference>
<dbReference type="GO" id="GO:0003942">
    <property type="term" value="F:N-acetyl-gamma-glutamyl-phosphate reductase activity"/>
    <property type="evidence" value="ECO:0007669"/>
    <property type="project" value="InterPro"/>
</dbReference>
<dbReference type="GO" id="GO:0051287">
    <property type="term" value="F:NAD binding"/>
    <property type="evidence" value="ECO:0007669"/>
    <property type="project" value="InterPro"/>
</dbReference>
<dbReference type="GO" id="GO:0070401">
    <property type="term" value="F:NADP+ binding"/>
    <property type="evidence" value="ECO:0007669"/>
    <property type="project" value="InterPro"/>
</dbReference>
<dbReference type="GO" id="GO:0042450">
    <property type="term" value="P:arginine biosynthetic process via ornithine"/>
    <property type="evidence" value="ECO:0007669"/>
    <property type="project" value="UniProtKB-UniRule"/>
</dbReference>
<dbReference type="GO" id="GO:0006526">
    <property type="term" value="P:L-arginine biosynthetic process"/>
    <property type="evidence" value="ECO:0007669"/>
    <property type="project" value="UniProtKB-UniPathway"/>
</dbReference>
<dbReference type="GO" id="GO:0019878">
    <property type="term" value="P:lysine biosynthetic process via aminoadipic acid"/>
    <property type="evidence" value="ECO:0007669"/>
    <property type="project" value="UniProtKB-UniRule"/>
</dbReference>
<dbReference type="CDD" id="cd23939">
    <property type="entry name" value="AGPR_1_C_LysY"/>
    <property type="match status" value="1"/>
</dbReference>
<dbReference type="CDD" id="cd17895">
    <property type="entry name" value="AGPR_1_N"/>
    <property type="match status" value="1"/>
</dbReference>
<dbReference type="Gene3D" id="3.30.360.10">
    <property type="entry name" value="Dihydrodipicolinate Reductase, domain 2"/>
    <property type="match status" value="1"/>
</dbReference>
<dbReference type="Gene3D" id="3.40.50.720">
    <property type="entry name" value="NAD(P)-binding Rossmann-like Domain"/>
    <property type="match status" value="1"/>
</dbReference>
<dbReference type="HAMAP" id="MF_00150">
    <property type="entry name" value="ArgC_type1"/>
    <property type="match status" value="1"/>
</dbReference>
<dbReference type="HAMAP" id="MF_02083">
    <property type="entry name" value="LysY"/>
    <property type="match status" value="1"/>
</dbReference>
<dbReference type="InterPro" id="IPR000706">
    <property type="entry name" value="AGPR_type-1"/>
</dbReference>
<dbReference type="InterPro" id="IPR037535">
    <property type="entry name" value="LysY"/>
</dbReference>
<dbReference type="InterPro" id="IPR036291">
    <property type="entry name" value="NAD(P)-bd_dom_sf"/>
</dbReference>
<dbReference type="InterPro" id="IPR050085">
    <property type="entry name" value="NAGSA_dehydrogenase"/>
</dbReference>
<dbReference type="InterPro" id="IPR000534">
    <property type="entry name" value="Semialdehyde_DH_NAD-bd"/>
</dbReference>
<dbReference type="NCBIfam" id="TIGR01850">
    <property type="entry name" value="argC"/>
    <property type="match status" value="1"/>
</dbReference>
<dbReference type="PANTHER" id="PTHR32338:SF11">
    <property type="entry name" value="[LYSW]-L-2-AMINOADIPATE_[LYSW]-L-GLUTAMATE PHOSPHATE REDUCTASE-RELATED"/>
    <property type="match status" value="1"/>
</dbReference>
<dbReference type="PANTHER" id="PTHR32338">
    <property type="entry name" value="N-ACETYL-GAMMA-GLUTAMYL-PHOSPHATE REDUCTASE, CHLOROPLASTIC-RELATED-RELATED"/>
    <property type="match status" value="1"/>
</dbReference>
<dbReference type="Pfam" id="PF01118">
    <property type="entry name" value="Semialdhyde_dh"/>
    <property type="match status" value="1"/>
</dbReference>
<dbReference type="Pfam" id="PF22698">
    <property type="entry name" value="Semialdhyde_dhC_1"/>
    <property type="match status" value="1"/>
</dbReference>
<dbReference type="SMART" id="SM00859">
    <property type="entry name" value="Semialdhyde_dh"/>
    <property type="match status" value="1"/>
</dbReference>
<dbReference type="SUPFAM" id="SSF55347">
    <property type="entry name" value="Glyceraldehyde-3-phosphate dehydrogenase-like, C-terminal domain"/>
    <property type="match status" value="1"/>
</dbReference>
<dbReference type="SUPFAM" id="SSF51735">
    <property type="entry name" value="NAD(P)-binding Rossmann-fold domains"/>
    <property type="match status" value="1"/>
</dbReference>
<protein>
    <recommendedName>
        <fullName evidence="1">Putative [LysW]-L-2-aminoadipate/[LysW]-L-glutamate phosphate reductase</fullName>
        <ecNumber evidence="1">1.2.1.103</ecNumber>
        <ecNumber evidence="1">1.2.1.106</ecNumber>
    </recommendedName>
</protein>
<organism>
    <name type="scientific">Pyrobaculum islandicum (strain DSM 4184 / JCM 9189 / GEO3)</name>
    <dbReference type="NCBI Taxonomy" id="384616"/>
    <lineage>
        <taxon>Archaea</taxon>
        <taxon>Thermoproteota</taxon>
        <taxon>Thermoprotei</taxon>
        <taxon>Thermoproteales</taxon>
        <taxon>Thermoproteaceae</taxon>
        <taxon>Pyrobaculum</taxon>
    </lineage>
</organism>